<name>VLTF2_VARV</name>
<protein>
    <recommendedName>
        <fullName>Viral late gene transcription factor 2</fullName>
        <shortName>VLTF-2</shortName>
    </recommendedName>
    <alternativeName>
        <fullName>Trans-activator protein A1</fullName>
    </alternativeName>
</protein>
<accession>P0DSV4</accession>
<accession>P33814</accession>
<dbReference type="EMBL" id="L22579">
    <property type="protein sequence ID" value="AAA60852.1"/>
    <property type="molecule type" value="Genomic_DNA"/>
</dbReference>
<dbReference type="EMBL" id="X76262">
    <property type="protein sequence ID" value="CAA53826.1"/>
    <property type="molecule type" value="Genomic_DNA"/>
</dbReference>
<dbReference type="PIR" id="F72163">
    <property type="entry name" value="F72163"/>
</dbReference>
<dbReference type="PIR" id="T28542">
    <property type="entry name" value="T28542"/>
</dbReference>
<dbReference type="RefSeq" id="NP_042148.1">
    <property type="nucleotide sequence ID" value="NC_001611.1"/>
</dbReference>
<dbReference type="GeneID" id="1486495"/>
<dbReference type="KEGG" id="vg:1486495"/>
<dbReference type="Proteomes" id="UP000119805">
    <property type="component" value="Segment"/>
</dbReference>
<dbReference type="GO" id="GO:0008270">
    <property type="term" value="F:zinc ion binding"/>
    <property type="evidence" value="ECO:0007669"/>
    <property type="project" value="InterPro"/>
</dbReference>
<dbReference type="InterPro" id="IPR004975">
    <property type="entry name" value="Poxvirus_VLTF2"/>
</dbReference>
<dbReference type="InterPro" id="IPR010507">
    <property type="entry name" value="Znf_MYM"/>
</dbReference>
<dbReference type="Pfam" id="PF03295">
    <property type="entry name" value="Pox_TAA1"/>
    <property type="match status" value="1"/>
</dbReference>
<dbReference type="Pfam" id="PF06467">
    <property type="entry name" value="zf-FCS"/>
    <property type="match status" value="1"/>
</dbReference>
<sequence>MAKRVSLPDVVISAPKAVFKPAKEEALACILPKYYKSMADMSIKTNSVIDKCWFCNQDLVFRPISIETFKGGEVGYFCSKICRDSLASMVKSHVALREEPKISLLPLVFYEDKEKVINTINLLRDKDGVYGSCYFKENSQIIDISLRSLL</sequence>
<organism>
    <name type="scientific">Variola virus</name>
    <dbReference type="NCBI Taxonomy" id="10255"/>
    <lineage>
        <taxon>Viruses</taxon>
        <taxon>Varidnaviria</taxon>
        <taxon>Bamfordvirae</taxon>
        <taxon>Nucleocytoviricota</taxon>
        <taxon>Pokkesviricetes</taxon>
        <taxon>Chitovirales</taxon>
        <taxon>Poxviridae</taxon>
        <taxon>Chordopoxvirinae</taxon>
        <taxon>Orthopoxvirus</taxon>
    </lineage>
</organism>
<keyword id="KW-0010">Activator</keyword>
<keyword id="KW-0804">Transcription</keyword>
<keyword id="KW-0805">Transcription regulation</keyword>
<evidence type="ECO:0000250" key="1">
    <source>
        <dbReference type="UniProtKB" id="P07610"/>
    </source>
</evidence>
<evidence type="ECO:0000305" key="2"/>
<proteinExistence type="evidence at transcript level"/>
<gene>
    <name type="primary">OPG126</name>
    <name type="synonym">VLTF2</name>
    <name type="ORF">A1L</name>
</gene>
<feature type="chain" id="PRO_0000448138" description="Viral late gene transcription factor 2">
    <location>
        <begin position="1"/>
        <end position="150"/>
    </location>
</feature>
<organismHost>
    <name type="scientific">Homo sapiens</name>
    <name type="common">Human</name>
    <dbReference type="NCBI Taxonomy" id="9606"/>
</organismHost>
<comment type="function">
    <text evidence="1">Acts with RNA polymerase to initiate transcription from late gene promoters.</text>
</comment>
<comment type="subunit">
    <text evidence="1">Interacts with itself. Interacts with the late transcription factors VLTF-1/OPG093.</text>
</comment>
<comment type="developmental stage">
    <text>Intermediate stages of infection.</text>
</comment>
<comment type="similarity">
    <text evidence="2">Belongs to the orthopoxvirus VLTF-2/OPG126 family.</text>
</comment>
<reference key="1">
    <citation type="journal article" date="1993" name="Nature">
        <title>Potential virulence determinants in terminal regions of variola smallpox virus genome.</title>
        <authorList>
            <person name="Massung R.F."/>
            <person name="Esposito J.J."/>
            <person name="Liu L.I."/>
            <person name="Qi J."/>
            <person name="Utterback T.R."/>
            <person name="Knight J.C."/>
            <person name="Aubin L."/>
            <person name="Yuran T.E."/>
            <person name="Parsons J.M."/>
            <person name="Loparev V.N."/>
            <person name="Selivanov N.A."/>
            <person name="Cavallaro K.F."/>
            <person name="Kerlavage A.R."/>
            <person name="Mahy B.W.J."/>
            <person name="Venter J.C."/>
        </authorList>
    </citation>
    <scope>NUCLEOTIDE SEQUENCE [GENOMIC DNA]</scope>
    <source>
        <strain>Bangladesh-1975</strain>
    </source>
</reference>
<reference key="2">
    <citation type="submission" date="1995-12" db="EMBL/GenBank/DDBJ databases">
        <title>XhoI-M DNA fragment of Variola minor virus strain Garcia-1966.</title>
        <authorList>
            <person name="Shchelkunov S.N."/>
            <person name="Totmenin A.V."/>
            <person name="Resenchuk S.M."/>
            <person name="Blinov V.M."/>
            <person name="Sandakhchiev L.S."/>
        </authorList>
    </citation>
    <scope>NUCLEOTIDE SEQUENCE [GENOMIC DNA]</scope>
    <source>
        <strain>Garcia-1966</strain>
    </source>
</reference>